<name>ATPL_MYCGA</name>
<proteinExistence type="inferred from homology"/>
<gene>
    <name evidence="2" type="primary">atpE</name>
    <name type="ordered locus">MYCGA3010</name>
    <name type="ORF">MGA_1167</name>
</gene>
<organism>
    <name type="scientific">Mycoplasmoides gallisepticum (strain R(low / passage 15 / clone 2))</name>
    <name type="common">Mycoplasma gallisepticum</name>
    <dbReference type="NCBI Taxonomy" id="710127"/>
    <lineage>
        <taxon>Bacteria</taxon>
        <taxon>Bacillati</taxon>
        <taxon>Mycoplasmatota</taxon>
        <taxon>Mycoplasmoidales</taxon>
        <taxon>Mycoplasmoidaceae</taxon>
        <taxon>Mycoplasmoides</taxon>
    </lineage>
</organism>
<keyword id="KW-0066">ATP synthesis</keyword>
<keyword id="KW-1003">Cell membrane</keyword>
<keyword id="KW-0138">CF(0)</keyword>
<keyword id="KW-0375">Hydrogen ion transport</keyword>
<keyword id="KW-0406">Ion transport</keyword>
<keyword id="KW-0446">Lipid-binding</keyword>
<keyword id="KW-0472">Membrane</keyword>
<keyword id="KW-1185">Reference proteome</keyword>
<keyword id="KW-0812">Transmembrane</keyword>
<keyword id="KW-1133">Transmembrane helix</keyword>
<keyword id="KW-0813">Transport</keyword>
<dbReference type="EMBL" id="X64256">
    <property type="protein sequence ID" value="CAA45546.1"/>
    <property type="molecule type" value="Genomic_DNA"/>
</dbReference>
<dbReference type="EMBL" id="AE015450">
    <property type="protein sequence ID" value="AAP56651.1"/>
    <property type="molecule type" value="Genomic_DNA"/>
</dbReference>
<dbReference type="PIR" id="S24334">
    <property type="entry name" value="S24334"/>
</dbReference>
<dbReference type="RefSeq" id="WP_011113542.1">
    <property type="nucleotide sequence ID" value="NC_004829.2"/>
</dbReference>
<dbReference type="SMR" id="P33258"/>
<dbReference type="KEGG" id="mga:MGA_1167"/>
<dbReference type="HOGENOM" id="CLU_148047_2_2_14"/>
<dbReference type="OrthoDB" id="9963183at2"/>
<dbReference type="Proteomes" id="UP000001418">
    <property type="component" value="Chromosome"/>
</dbReference>
<dbReference type="GO" id="GO:0005886">
    <property type="term" value="C:plasma membrane"/>
    <property type="evidence" value="ECO:0007669"/>
    <property type="project" value="UniProtKB-SubCell"/>
</dbReference>
<dbReference type="GO" id="GO:0045259">
    <property type="term" value="C:proton-transporting ATP synthase complex"/>
    <property type="evidence" value="ECO:0007669"/>
    <property type="project" value="UniProtKB-KW"/>
</dbReference>
<dbReference type="GO" id="GO:0033177">
    <property type="term" value="C:proton-transporting two-sector ATPase complex, proton-transporting domain"/>
    <property type="evidence" value="ECO:0007669"/>
    <property type="project" value="InterPro"/>
</dbReference>
<dbReference type="GO" id="GO:0008289">
    <property type="term" value="F:lipid binding"/>
    <property type="evidence" value="ECO:0007669"/>
    <property type="project" value="UniProtKB-KW"/>
</dbReference>
<dbReference type="GO" id="GO:0046933">
    <property type="term" value="F:proton-transporting ATP synthase activity, rotational mechanism"/>
    <property type="evidence" value="ECO:0007669"/>
    <property type="project" value="UniProtKB-UniRule"/>
</dbReference>
<dbReference type="CDD" id="cd18184">
    <property type="entry name" value="ATP-synt_Fo_c_NaATPase"/>
    <property type="match status" value="1"/>
</dbReference>
<dbReference type="Gene3D" id="1.20.120.610">
    <property type="entry name" value="lithium bound rotor ring of v- atpase"/>
    <property type="match status" value="1"/>
</dbReference>
<dbReference type="HAMAP" id="MF_01396">
    <property type="entry name" value="ATP_synth_c_bact"/>
    <property type="match status" value="1"/>
</dbReference>
<dbReference type="InterPro" id="IPR000454">
    <property type="entry name" value="ATP_synth_F0_csu"/>
</dbReference>
<dbReference type="InterPro" id="IPR020537">
    <property type="entry name" value="ATP_synth_F0_csu_DDCD_BS"/>
</dbReference>
<dbReference type="InterPro" id="IPR002379">
    <property type="entry name" value="ATPase_proteolipid_c-like_dom"/>
</dbReference>
<dbReference type="InterPro" id="IPR035921">
    <property type="entry name" value="F/V-ATP_Csub_sf"/>
</dbReference>
<dbReference type="Pfam" id="PF00137">
    <property type="entry name" value="ATP-synt_C"/>
    <property type="match status" value="1"/>
</dbReference>
<dbReference type="PRINTS" id="PR00124">
    <property type="entry name" value="ATPASEC"/>
</dbReference>
<dbReference type="SUPFAM" id="SSF81333">
    <property type="entry name" value="F1F0 ATP synthase subunit C"/>
    <property type="match status" value="1"/>
</dbReference>
<dbReference type="PROSITE" id="PS00605">
    <property type="entry name" value="ATPASE_C"/>
    <property type="match status" value="1"/>
</dbReference>
<protein>
    <recommendedName>
        <fullName evidence="2">ATP synthase subunit c</fullName>
    </recommendedName>
    <alternativeName>
        <fullName evidence="2">ATP synthase F(0) sector subunit c</fullName>
    </alternativeName>
    <alternativeName>
        <fullName evidence="2">F-type ATPase subunit c</fullName>
        <shortName evidence="2">F-ATPase subunit c</shortName>
    </alternativeName>
    <alternativeName>
        <fullName evidence="2">Lipid-binding protein</fullName>
    </alternativeName>
</protein>
<sequence length="96" mass="10001">MNIFLVIHELINQADQVNVTLTNHVGAYIGAGMAMTAAAGVGVGQGFASGLCATALARNPELLPKIQLFWIVGSAIAESSAIYGLIIAFILIFVAR</sequence>
<comment type="function">
    <text evidence="2">F(1)F(0) ATP synthase produces ATP from ADP in the presence of a proton or sodium gradient. F-type ATPases consist of two structural domains, F(1) containing the extramembraneous catalytic core and F(0) containing the membrane proton channel, linked together by a central stalk and a peripheral stalk. During catalysis, ATP synthesis in the catalytic domain of F(1) is coupled via a rotary mechanism of the central stalk subunits to proton translocation.</text>
</comment>
<comment type="function">
    <text evidence="2">Key component of the F(0) channel; it plays a direct role in translocation across the membrane. A homomeric c-ring of between 10-14 subunits forms the central stalk rotor element with the F(1) delta and epsilon subunits.</text>
</comment>
<comment type="subunit">
    <text evidence="2">F-type ATPases have 2 components, F(1) - the catalytic core - and F(0) - the membrane proton channel. F(1) has five subunits: alpha(3), beta(3), gamma(1), delta(1), epsilon(1). F(0) has three main subunits: a(1), b(2) and c(10-14). The alpha and beta chains form an alternating ring which encloses part of the gamma chain. F(1) is attached to F(0) by a central stalk formed by the gamma and epsilon chains, while a peripheral stalk is formed by the delta and b chains.</text>
</comment>
<comment type="subcellular location">
    <subcellularLocation>
        <location evidence="2">Cell membrane</location>
        <topology evidence="2">Multi-pass membrane protein</topology>
    </subcellularLocation>
</comment>
<comment type="miscellaneous">
    <text evidence="1">Dicyclohexylcarbodiimide (DCDD) binding to the active glutamate residue inhibits ATPase in vitro.</text>
</comment>
<comment type="similarity">
    <text evidence="2">Belongs to the ATPase C chain family.</text>
</comment>
<accession>P33258</accession>
<evidence type="ECO:0000250" key="1"/>
<evidence type="ECO:0000255" key="2">
    <source>
        <dbReference type="HAMAP-Rule" id="MF_01396"/>
    </source>
</evidence>
<evidence type="ECO:0000305" key="3"/>
<reference key="1">
    <citation type="journal article" date="1992" name="Biochem. J.">
        <title>Nucleotide sequence, organization and characterization of the atp genes and the encoded subunits of Mycoplasma gallisepticum ATPase.</title>
        <authorList>
            <person name="Rasmussen O.F."/>
            <person name="Shirvan M.H."/>
            <person name="Margalit H."/>
            <person name="Christiansen C."/>
            <person name="Rottem S."/>
        </authorList>
    </citation>
    <scope>NUCLEOTIDE SEQUENCE [GENOMIC DNA]</scope>
    <source>
        <strain>A5969Var.B</strain>
    </source>
</reference>
<reference key="2">
    <citation type="journal article" date="2003" name="Microbiology">
        <title>The complete genome sequence of the avian pathogen Mycoplasma gallisepticum strain R(low).</title>
        <authorList>
            <person name="Papazisi L."/>
            <person name="Gorton T.S."/>
            <person name="Kutish G."/>
            <person name="Markham P.F."/>
            <person name="Browning G.F."/>
            <person name="Nguyen D.K."/>
            <person name="Swartzell S."/>
            <person name="Madan A."/>
            <person name="Mahairas G."/>
            <person name="Geary S.J."/>
        </authorList>
    </citation>
    <scope>NUCLEOTIDE SEQUENCE [LARGE SCALE GENOMIC DNA]</scope>
    <source>
        <strain>R(low / passage 15 / clone 2)</strain>
    </source>
</reference>
<feature type="chain" id="PRO_0000112151" description="ATP synthase subunit c">
    <location>
        <begin position="1"/>
        <end position="96"/>
    </location>
</feature>
<feature type="transmembrane region" description="Helical" evidence="2">
    <location>
        <begin position="24"/>
        <end position="44"/>
    </location>
</feature>
<feature type="transmembrane region" description="Helical" evidence="2">
    <location>
        <begin position="75"/>
        <end position="95"/>
    </location>
</feature>
<feature type="site" description="Reversibly protonated during proton transport" evidence="2">
    <location>
        <position position="78"/>
    </location>
</feature>
<feature type="sequence conflict" description="In Ref. 1; CAA45546." evidence="3" ref="1">
    <original>A</original>
    <variation>S</variation>
    <location>
        <position position="81"/>
    </location>
</feature>